<feature type="chain" id="PRO_0000085582" description="L-ascorbate oxidase">
    <location>
        <begin position="1"/>
        <end position="552"/>
    </location>
</feature>
<feature type="domain" description="Plastocyanin-like 1">
    <location>
        <begin position="1"/>
        <end position="122"/>
    </location>
</feature>
<feature type="domain" description="Plastocyanin-like 2">
    <location>
        <begin position="134"/>
        <end position="300"/>
    </location>
</feature>
<feature type="domain" description="Plastocyanin-like 3">
    <location>
        <begin position="344"/>
        <end position="523"/>
    </location>
</feature>
<feature type="binding site" description="type 2 copper site" evidence="2">
    <location>
        <position position="60"/>
    </location>
    <ligand>
        <name>Cu cation</name>
        <dbReference type="ChEBI" id="CHEBI:23378"/>
        <label>1</label>
    </ligand>
</feature>
<feature type="binding site" description="type 3 copper site" evidence="2">
    <location>
        <position position="62"/>
    </location>
    <ligand>
        <name>Cu cation</name>
        <dbReference type="ChEBI" id="CHEBI:23378"/>
        <label>2</label>
    </ligand>
</feature>
<feature type="binding site" description="type 3 copper site" evidence="2">
    <location>
        <position position="104"/>
    </location>
    <ligand>
        <name>Cu cation</name>
        <dbReference type="ChEBI" id="CHEBI:23378"/>
        <label>2</label>
    </ligand>
</feature>
<feature type="binding site" description="type 3 copper site" evidence="2">
    <location>
        <position position="106"/>
    </location>
    <ligand>
        <name>Cu cation</name>
        <dbReference type="ChEBI" id="CHEBI:23378"/>
        <label>3</label>
    </ligand>
</feature>
<feature type="binding site" description="type 1 copper site" evidence="2">
    <location>
        <position position="445"/>
    </location>
    <ligand>
        <name>Cu cation</name>
        <dbReference type="ChEBI" id="CHEBI:23378"/>
        <label>4</label>
    </ligand>
</feature>
<feature type="binding site" description="type 2 copper site" evidence="2">
    <location>
        <position position="448"/>
    </location>
    <ligand>
        <name>Cu cation</name>
        <dbReference type="ChEBI" id="CHEBI:23378"/>
        <label>1</label>
    </ligand>
</feature>
<feature type="binding site" description="type 3 copper site" evidence="2">
    <location>
        <position position="450"/>
    </location>
    <ligand>
        <name>Cu cation</name>
        <dbReference type="ChEBI" id="CHEBI:23378"/>
        <label>3</label>
    </ligand>
</feature>
<feature type="binding site" description="type 3 copper site" evidence="2">
    <location>
        <position position="506"/>
    </location>
    <ligand>
        <name>Cu cation</name>
        <dbReference type="ChEBI" id="CHEBI:23378"/>
        <label>3</label>
    </ligand>
</feature>
<feature type="binding site" description="type 1 copper site" evidence="2">
    <location>
        <position position="507"/>
    </location>
    <ligand>
        <name>Cu cation</name>
        <dbReference type="ChEBI" id="CHEBI:23378"/>
        <label>4</label>
    </ligand>
</feature>
<feature type="binding site" description="type 3 copper site" evidence="2">
    <location>
        <position position="508"/>
    </location>
    <ligand>
        <name>Cu cation</name>
        <dbReference type="ChEBI" id="CHEBI:23378"/>
        <label>2</label>
    </ligand>
</feature>
<feature type="binding site" description="type 1 copper site" evidence="2">
    <location>
        <position position="512"/>
    </location>
    <ligand>
        <name>Cu cation</name>
        <dbReference type="ChEBI" id="CHEBI:23378"/>
        <label>4</label>
    </ligand>
</feature>
<feature type="binding site" description="type 1 copper site" evidence="2">
    <location>
        <position position="517"/>
    </location>
    <ligand>
        <name>Cu cation</name>
        <dbReference type="ChEBI" id="CHEBI:23378"/>
        <label>4</label>
    </ligand>
</feature>
<feature type="glycosylation site" id="CAR_000149" description="N-linked (GlcNAc...) asparagine" evidence="2">
    <location>
        <position position="92"/>
    </location>
</feature>
<feature type="glycosylation site" description="N-linked (GlcNAc...) asparagine" evidence="1">
    <location>
        <position position="325"/>
    </location>
</feature>
<feature type="glycosylation site" description="N-linked (GlcNAc...) asparagine" evidence="1">
    <location>
        <position position="440"/>
    </location>
</feature>
<feature type="disulfide bond" evidence="2">
    <location>
        <begin position="19"/>
        <end position="201"/>
    </location>
</feature>
<feature type="disulfide bond" evidence="2">
    <location>
        <begin position="81"/>
        <end position="538"/>
    </location>
</feature>
<feature type="disulfide bond" evidence="2">
    <location>
        <begin position="180"/>
        <end position="193"/>
    </location>
</feature>
<feature type="strand" evidence="4">
    <location>
        <begin position="3"/>
        <end position="15"/>
    </location>
</feature>
<feature type="strand" evidence="4">
    <location>
        <begin position="22"/>
        <end position="27"/>
    </location>
</feature>
<feature type="strand" evidence="4">
    <location>
        <begin position="30"/>
        <end position="32"/>
    </location>
</feature>
<feature type="strand" evidence="4">
    <location>
        <begin position="36"/>
        <end position="39"/>
    </location>
</feature>
<feature type="strand" evidence="4">
    <location>
        <begin position="43"/>
        <end position="50"/>
    </location>
</feature>
<feature type="strand" evidence="4">
    <location>
        <begin position="59"/>
        <end position="62"/>
    </location>
</feature>
<feature type="helix" evidence="4">
    <location>
        <begin position="70"/>
        <end position="72"/>
    </location>
</feature>
<feature type="turn" evidence="4">
    <location>
        <begin position="76"/>
        <end position="78"/>
    </location>
</feature>
<feature type="strand" evidence="4">
    <location>
        <begin position="88"/>
        <end position="94"/>
    </location>
</feature>
<feature type="strand" evidence="4">
    <location>
        <begin position="99"/>
        <end position="105"/>
    </location>
</feature>
<feature type="turn" evidence="4">
    <location>
        <begin position="108"/>
        <end position="110"/>
    </location>
</feature>
<feature type="helix" evidence="4">
    <location>
        <begin position="111"/>
        <end position="113"/>
    </location>
</feature>
<feature type="strand" evidence="4">
    <location>
        <begin position="116"/>
        <end position="122"/>
    </location>
</feature>
<feature type="strand" evidence="4">
    <location>
        <begin position="134"/>
        <end position="144"/>
    </location>
</feature>
<feature type="helix" evidence="4">
    <location>
        <begin position="149"/>
        <end position="155"/>
    </location>
</feature>
<feature type="strand" evidence="4">
    <location>
        <begin position="158"/>
        <end position="160"/>
    </location>
</feature>
<feature type="strand" evidence="4">
    <location>
        <begin position="168"/>
        <end position="172"/>
    </location>
</feature>
<feature type="strand" evidence="4">
    <location>
        <begin position="178"/>
        <end position="181"/>
    </location>
</feature>
<feature type="helix" evidence="4">
    <location>
        <begin position="184"/>
        <end position="186"/>
    </location>
</feature>
<feature type="strand" evidence="4">
    <location>
        <begin position="206"/>
        <end position="208"/>
    </location>
</feature>
<feature type="strand" evidence="4">
    <location>
        <begin position="213"/>
        <end position="220"/>
    </location>
</feature>
<feature type="strand" evidence="4">
    <location>
        <begin position="226"/>
        <end position="231"/>
    </location>
</feature>
<feature type="strand" evidence="4">
    <location>
        <begin position="236"/>
        <end position="241"/>
    </location>
</feature>
<feature type="strand" evidence="4">
    <location>
        <begin position="244"/>
        <end position="252"/>
    </location>
</feature>
<feature type="strand" evidence="4">
    <location>
        <begin position="254"/>
        <end position="256"/>
    </location>
</feature>
<feature type="strand" evidence="4">
    <location>
        <begin position="261"/>
        <end position="267"/>
    </location>
</feature>
<feature type="strand" evidence="4">
    <location>
        <begin position="276"/>
        <end position="285"/>
    </location>
</feature>
<feature type="strand" evidence="4">
    <location>
        <begin position="292"/>
        <end position="298"/>
    </location>
</feature>
<feature type="helix" evidence="4">
    <location>
        <begin position="320"/>
        <end position="327"/>
    </location>
</feature>
<feature type="strand" evidence="4">
    <location>
        <begin position="344"/>
        <end position="356"/>
    </location>
</feature>
<feature type="strand" evidence="4">
    <location>
        <begin position="359"/>
        <end position="364"/>
    </location>
</feature>
<feature type="strand" evidence="4">
    <location>
        <begin position="367"/>
        <end position="369"/>
    </location>
</feature>
<feature type="helix" evidence="4">
    <location>
        <begin position="376"/>
        <end position="381"/>
    </location>
</feature>
<feature type="strand" evidence="4">
    <location>
        <begin position="413"/>
        <end position="415"/>
    </location>
</feature>
<feature type="strand" evidence="4">
    <location>
        <begin position="419"/>
        <end position="421"/>
    </location>
</feature>
<feature type="strand" evidence="4">
    <location>
        <begin position="426"/>
        <end position="433"/>
    </location>
</feature>
<feature type="strand" evidence="4">
    <location>
        <begin position="445"/>
        <end position="449"/>
    </location>
</feature>
<feature type="strand" evidence="4">
    <location>
        <begin position="454"/>
        <end position="463"/>
    </location>
</feature>
<feature type="helix" evidence="4">
    <location>
        <begin position="466"/>
        <end position="471"/>
    </location>
</feature>
<feature type="strand" evidence="4">
    <location>
        <begin position="479"/>
        <end position="485"/>
    </location>
</feature>
<feature type="strand" evidence="4">
    <location>
        <begin position="489"/>
        <end position="496"/>
    </location>
</feature>
<feature type="strand" evidence="4">
    <location>
        <begin position="501"/>
        <end position="509"/>
    </location>
</feature>
<feature type="helix" evidence="4">
    <location>
        <begin position="510"/>
        <end position="514"/>
    </location>
</feature>
<feature type="strand" evidence="4">
    <location>
        <begin position="518"/>
        <end position="523"/>
    </location>
</feature>
<feature type="helix" evidence="4">
    <location>
        <begin position="525"/>
        <end position="527"/>
    </location>
</feature>
<feature type="helix" evidence="4">
    <location>
        <begin position="533"/>
        <end position="536"/>
    </location>
</feature>
<feature type="helix" evidence="4">
    <location>
        <begin position="539"/>
        <end position="545"/>
    </location>
</feature>
<sequence length="552" mass="61704">SQIRHYKWEVEYMFWAPNCNENIVMGINGQFPGPTIRANAGDSVVVELTNKLHTEGVVIHWHGILQRGTPWADGTASISQCAINPGETFFYNFTVDNPGTFFYHGHLGMQRSAGLYGSLIVDPPQGKKEPFHYDGEINLLLSDWWHQSIHKQEVGLSSKPIRWIGEPQTILLNGRGQFDCSIAAKYDSNLEPCKLKGSESCAPYIFHVSPKKTYRIRIASTTALAALNFAIGNHQLLVVEADGNYVQPFYTSDIDIYSGESYSVLITTDQNPSENYWVSVGTRARHPNTPPGLTLLNYLPNSVSKLPTSPPPQTPAWDDFDRSKNFTYRITAAMGSPKPPVKFNRRIFLLNTQNVINGYVKWAINDVSLALPPTPYLGAMKYNLLHAFDQNPPPEVFPEDYDIDTPPTNEKTRIGNGVYQFKIGEVVDVILQNANMMKENLSETHPWHLHGHDFWVLGYGDGKFSAEEESSLNLKNPPLRNTVVIFPYGWTAIRFVADNPGVWAFHCHIEPHLHMGMGVVFAEGVEKVGRIPTKALACGGTAKSLINNPKNP</sequence>
<reference key="1">
    <citation type="journal article" date="1992" name="J. Mol. Biol.">
        <title>Refined crystal structure of ascorbate oxidase at 1.9-A resolution.</title>
        <authorList>
            <person name="Messerschmidt A."/>
            <person name="Ladenstein R."/>
            <person name="Huber R."/>
            <person name="Bolognesi M."/>
            <person name="Avigliano L."/>
            <person name="Petruzzelli R."/>
            <person name="Rossi A."/>
            <person name="Finazzi-Agro A."/>
        </authorList>
    </citation>
    <scope>X-RAY CRYSTALLOGRAPHY (1.9 ANGSTROMS)</scope>
    <scope>DISULFIDE BONDS</scope>
    <scope>GLYCOSYLATION AT ASN-92</scope>
    <scope>SUBUNIT</scope>
    <scope>METAL BINDING</scope>
</reference>
<reference key="2">
    <citation type="journal article" date="1989" name="J. Mol. Biol.">
        <title>X-ray crystal structure of the blue oxidase ascorbate oxidase from zucchini. Analysis of the polypeptide fold and a model of the copper sites and ligands.</title>
        <authorList>
            <person name="Messerschmidt A."/>
            <person name="Rossi A."/>
            <person name="Ladenstein R."/>
            <person name="Huber R."/>
            <person name="Bolognesi M."/>
            <person name="Gatti G."/>
            <person name="Marchesini A."/>
            <person name="Petruzzelli R."/>
            <person name="Finazzi-Agro A."/>
        </authorList>
    </citation>
    <scope>X-RAY CRYSTALLOGRAPHY (2.5 ANGSTROMS)</scope>
    <scope>METAL BINDING</scope>
</reference>
<proteinExistence type="evidence at protein level"/>
<name>ASO_CUCPM</name>
<organism>
    <name type="scientific">Cucurbita pepo var. melopepo</name>
    <name type="common">Zucchini</name>
    <dbReference type="NCBI Taxonomy" id="3665"/>
    <lineage>
        <taxon>Eukaryota</taxon>
        <taxon>Viridiplantae</taxon>
        <taxon>Streptophyta</taxon>
        <taxon>Embryophyta</taxon>
        <taxon>Tracheophyta</taxon>
        <taxon>Spermatophyta</taxon>
        <taxon>Magnoliopsida</taxon>
        <taxon>eudicotyledons</taxon>
        <taxon>Gunneridae</taxon>
        <taxon>Pentapetalae</taxon>
        <taxon>rosids</taxon>
        <taxon>fabids</taxon>
        <taxon>Cucurbitales</taxon>
        <taxon>Cucurbitaceae</taxon>
        <taxon>Cucurbiteae</taxon>
        <taxon>Cucurbita</taxon>
    </lineage>
</organism>
<evidence type="ECO:0000255" key="1"/>
<evidence type="ECO:0000269" key="2">
    <source>
    </source>
</evidence>
<evidence type="ECO:0000305" key="3"/>
<evidence type="ECO:0007829" key="4">
    <source>
        <dbReference type="PDB" id="1AOZ"/>
    </source>
</evidence>
<dbReference type="EC" id="1.10.3.3"/>
<dbReference type="PIR" id="A51027">
    <property type="entry name" value="A51027"/>
</dbReference>
<dbReference type="PDB" id="1AOZ">
    <property type="method" value="X-ray"/>
    <property type="resolution" value="1.90 A"/>
    <property type="chains" value="A/B=1-552"/>
</dbReference>
<dbReference type="PDB" id="1ASO">
    <property type="method" value="X-ray"/>
    <property type="resolution" value="2.20 A"/>
    <property type="chains" value="A/B=1-552"/>
</dbReference>
<dbReference type="PDB" id="1ASP">
    <property type="method" value="X-ray"/>
    <property type="resolution" value="2.59 A"/>
    <property type="chains" value="A/B=1-552"/>
</dbReference>
<dbReference type="PDB" id="1ASQ">
    <property type="method" value="X-ray"/>
    <property type="resolution" value="2.32 A"/>
    <property type="chains" value="A/B=1-552"/>
</dbReference>
<dbReference type="PDBsum" id="1AOZ"/>
<dbReference type="PDBsum" id="1ASO"/>
<dbReference type="PDBsum" id="1ASP"/>
<dbReference type="PDBsum" id="1ASQ"/>
<dbReference type="SMR" id="P37064"/>
<dbReference type="GlyConnect" id="328">
    <property type="glycosylation" value="4 N-Linked glycans (1 site)"/>
</dbReference>
<dbReference type="BioCyc" id="MetaCyc:MONOMER-17019"/>
<dbReference type="BRENDA" id="1.10.3.3">
    <property type="organism ID" value="1740"/>
</dbReference>
<dbReference type="EvolutionaryTrace" id="P37064"/>
<dbReference type="GO" id="GO:0005576">
    <property type="term" value="C:extracellular region"/>
    <property type="evidence" value="ECO:0007669"/>
    <property type="project" value="UniProtKB-SubCell"/>
</dbReference>
<dbReference type="GO" id="GO:0009506">
    <property type="term" value="C:plasmodesma"/>
    <property type="evidence" value="ECO:0007669"/>
    <property type="project" value="TreeGrafter"/>
</dbReference>
<dbReference type="GO" id="GO:0005507">
    <property type="term" value="F:copper ion binding"/>
    <property type="evidence" value="ECO:0007669"/>
    <property type="project" value="InterPro"/>
</dbReference>
<dbReference type="GO" id="GO:0008447">
    <property type="term" value="F:L-ascorbate oxidase activity"/>
    <property type="evidence" value="ECO:0007669"/>
    <property type="project" value="UniProtKB-EC"/>
</dbReference>
<dbReference type="CDD" id="cd13845">
    <property type="entry name" value="CuRO_1_AAO"/>
    <property type="match status" value="1"/>
</dbReference>
<dbReference type="CDD" id="cd13871">
    <property type="entry name" value="CuRO_2_AAO"/>
    <property type="match status" value="1"/>
</dbReference>
<dbReference type="CDD" id="cd13893">
    <property type="entry name" value="CuRO_3_AAO"/>
    <property type="match status" value="1"/>
</dbReference>
<dbReference type="FunFam" id="2.60.40.420:FF:000058">
    <property type="entry name" value="L-ascorbate oxidase"/>
    <property type="match status" value="1"/>
</dbReference>
<dbReference type="FunFam" id="2.60.40.420:FF:000059">
    <property type="entry name" value="L-ascorbate oxidase"/>
    <property type="match status" value="1"/>
</dbReference>
<dbReference type="FunFam" id="2.60.40.420:FF:000060">
    <property type="entry name" value="L-ascorbate oxidase"/>
    <property type="match status" value="1"/>
</dbReference>
<dbReference type="Gene3D" id="2.60.40.420">
    <property type="entry name" value="Cupredoxins - blue copper proteins"/>
    <property type="match status" value="3"/>
</dbReference>
<dbReference type="InterPro" id="IPR011707">
    <property type="entry name" value="Cu-oxidase-like_N"/>
</dbReference>
<dbReference type="InterPro" id="IPR001117">
    <property type="entry name" value="Cu-oxidase_2nd"/>
</dbReference>
<dbReference type="InterPro" id="IPR011706">
    <property type="entry name" value="Cu-oxidase_C"/>
</dbReference>
<dbReference type="InterPro" id="IPR045087">
    <property type="entry name" value="Cu-oxidase_fam"/>
</dbReference>
<dbReference type="InterPro" id="IPR033138">
    <property type="entry name" value="Cu_oxidase_CS"/>
</dbReference>
<dbReference type="InterPro" id="IPR002355">
    <property type="entry name" value="Cu_oxidase_Cu_BS"/>
</dbReference>
<dbReference type="InterPro" id="IPR008972">
    <property type="entry name" value="Cupredoxin"/>
</dbReference>
<dbReference type="InterPro" id="IPR034259">
    <property type="entry name" value="CuRO_1_AAO"/>
</dbReference>
<dbReference type="InterPro" id="IPR034258">
    <property type="entry name" value="CuRO_2_AAO"/>
</dbReference>
<dbReference type="InterPro" id="IPR034267">
    <property type="entry name" value="CuRO_3_AAO"/>
</dbReference>
<dbReference type="InterPro" id="IPR017760">
    <property type="entry name" value="L-ascorbate_oxidase_pln"/>
</dbReference>
<dbReference type="NCBIfam" id="TIGR03388">
    <property type="entry name" value="ascorbase"/>
    <property type="match status" value="1"/>
</dbReference>
<dbReference type="PANTHER" id="PTHR11709:SF394">
    <property type="entry name" value="FI03373P-RELATED"/>
    <property type="match status" value="1"/>
</dbReference>
<dbReference type="PANTHER" id="PTHR11709">
    <property type="entry name" value="MULTI-COPPER OXIDASE"/>
    <property type="match status" value="1"/>
</dbReference>
<dbReference type="Pfam" id="PF00394">
    <property type="entry name" value="Cu-oxidase"/>
    <property type="match status" value="1"/>
</dbReference>
<dbReference type="Pfam" id="PF07731">
    <property type="entry name" value="Cu-oxidase_2"/>
    <property type="match status" value="1"/>
</dbReference>
<dbReference type="Pfam" id="PF07732">
    <property type="entry name" value="Cu-oxidase_3"/>
    <property type="match status" value="1"/>
</dbReference>
<dbReference type="SUPFAM" id="SSF49503">
    <property type="entry name" value="Cupredoxins"/>
    <property type="match status" value="3"/>
</dbReference>
<dbReference type="PROSITE" id="PS00079">
    <property type="entry name" value="MULTICOPPER_OXIDASE1"/>
    <property type="match status" value="1"/>
</dbReference>
<dbReference type="PROSITE" id="PS00080">
    <property type="entry name" value="MULTICOPPER_OXIDASE2"/>
    <property type="match status" value="1"/>
</dbReference>
<accession>P37064</accession>
<keyword id="KW-0002">3D-structure</keyword>
<keyword id="KW-0186">Copper</keyword>
<keyword id="KW-1015">Disulfide bond</keyword>
<keyword id="KW-0325">Glycoprotein</keyword>
<keyword id="KW-0479">Metal-binding</keyword>
<keyword id="KW-0560">Oxidoreductase</keyword>
<keyword id="KW-0677">Repeat</keyword>
<keyword id="KW-0964">Secreted</keyword>
<protein>
    <recommendedName>
        <fullName>L-ascorbate oxidase</fullName>
        <shortName>ASO</shortName>
        <shortName>Ascorbase</shortName>
        <ecNumber>1.10.3.3</ecNumber>
    </recommendedName>
</protein>
<comment type="function">
    <text>May be involved in a redox system involving ascorbic acid.</text>
</comment>
<comment type="catalytic activity">
    <reaction>
        <text>4 L-ascorbate + O2 = 4 monodehydro-L-ascorbate radical + 2 H2O</text>
        <dbReference type="Rhea" id="RHEA:30243"/>
        <dbReference type="ChEBI" id="CHEBI:15377"/>
        <dbReference type="ChEBI" id="CHEBI:15379"/>
        <dbReference type="ChEBI" id="CHEBI:38290"/>
        <dbReference type="ChEBI" id="CHEBI:59513"/>
        <dbReference type="EC" id="1.10.3.3"/>
    </reaction>
</comment>
<comment type="cofactor">
    <cofactor>
        <name>Cu cation</name>
        <dbReference type="ChEBI" id="CHEBI:23378"/>
    </cofactor>
    <text>Binds 4 Cu cations per monomer. The Cu cations are bound as 3 distinct Cu centers known as type 1 or blue, type 2 or normal, and type 3 or coupled binuclear.</text>
</comment>
<comment type="subunit">
    <text evidence="2">Dimer.</text>
</comment>
<comment type="subcellular location">
    <subcellularLocation>
        <location evidence="3">Secreted</location>
    </subcellularLocation>
</comment>
<comment type="similarity">
    <text evidence="3">Belongs to the multicopper oxidase family.</text>
</comment>